<comment type="function">
    <text evidence="1">Negative regulator of class I heat shock genes (grpE-dnaK-dnaJ and groELS operons). Prevents heat-shock induction of these operons.</text>
</comment>
<comment type="similarity">
    <text evidence="1">Belongs to the HrcA family.</text>
</comment>
<proteinExistence type="inferred from homology"/>
<evidence type="ECO:0000255" key="1">
    <source>
        <dbReference type="HAMAP-Rule" id="MF_00081"/>
    </source>
</evidence>
<keyword id="KW-0678">Repressor</keyword>
<keyword id="KW-0346">Stress response</keyword>
<keyword id="KW-0804">Transcription</keyword>
<keyword id="KW-0805">Transcription regulation</keyword>
<protein>
    <recommendedName>
        <fullName evidence="1">Heat-inducible transcription repressor HrcA</fullName>
    </recommendedName>
</protein>
<sequence>MITQRQNDILNLIVELFTQTHEPVGSKALQRTIDSSSATIRNDMAKLEKLGLLEKAHTSSGRMPSPAGFKYFVEHSLRLDSIDEQDIYYVIKAFDFEAFKLEDMLQKASHILSEMTGYTSVILDVEPARQRLTGFDVVQLSNHDALAVMTLDESKPVTVQFAIPRNFLTRDLIAFKAIVEERLLDGSVMDIHYKLRTEIPQIVQKYFVTTDNVLQLFDYVFSELFLETVFVAGKVNSLTYSDLSTYQFLDNEQQVAISLRQSLKEGEMASVQVADSQEAALADVSVLTHKFLIPYRGFGLLSLIGPIDMDYRRSVSLVNIIGKVLATKLGDYYRYLNSNHYEVH</sequence>
<reference key="1">
    <citation type="journal article" date="2005" name="Proc. Natl. Acad. Sci. U.S.A.">
        <title>Genome analysis of multiple pathogenic isolates of Streptococcus agalactiae: implications for the microbial 'pan-genome'.</title>
        <authorList>
            <person name="Tettelin H."/>
            <person name="Masignani V."/>
            <person name="Cieslewicz M.J."/>
            <person name="Donati C."/>
            <person name="Medini D."/>
            <person name="Ward N.L."/>
            <person name="Angiuoli S.V."/>
            <person name="Crabtree J."/>
            <person name="Jones A.L."/>
            <person name="Durkin A.S."/>
            <person name="DeBoy R.T."/>
            <person name="Davidsen T.M."/>
            <person name="Mora M."/>
            <person name="Scarselli M."/>
            <person name="Margarit y Ros I."/>
            <person name="Peterson J.D."/>
            <person name="Hauser C.R."/>
            <person name="Sundaram J.P."/>
            <person name="Nelson W.C."/>
            <person name="Madupu R."/>
            <person name="Brinkac L.M."/>
            <person name="Dodson R.J."/>
            <person name="Rosovitz M.J."/>
            <person name="Sullivan S.A."/>
            <person name="Daugherty S.C."/>
            <person name="Haft D.H."/>
            <person name="Selengut J."/>
            <person name="Gwinn M.L."/>
            <person name="Zhou L."/>
            <person name="Zafar N."/>
            <person name="Khouri H."/>
            <person name="Radune D."/>
            <person name="Dimitrov G."/>
            <person name="Watkins K."/>
            <person name="O'Connor K.J."/>
            <person name="Smith S."/>
            <person name="Utterback T.R."/>
            <person name="White O."/>
            <person name="Rubens C.E."/>
            <person name="Grandi G."/>
            <person name="Madoff L.C."/>
            <person name="Kasper D.L."/>
            <person name="Telford J.L."/>
            <person name="Wessels M.R."/>
            <person name="Rappuoli R."/>
            <person name="Fraser C.M."/>
        </authorList>
    </citation>
    <scope>NUCLEOTIDE SEQUENCE [LARGE SCALE GENOMIC DNA]</scope>
    <source>
        <strain>ATCC 27591 / A909 / CDC SS700</strain>
    </source>
</reference>
<dbReference type="EMBL" id="CP000114">
    <property type="protein sequence ID" value="ABA44888.1"/>
    <property type="molecule type" value="Genomic_DNA"/>
</dbReference>
<dbReference type="RefSeq" id="WP_001873630.1">
    <property type="nucleotide sequence ID" value="NC_007432.1"/>
</dbReference>
<dbReference type="SMR" id="Q3K3T4"/>
<dbReference type="KEGG" id="sak:SAK_0145"/>
<dbReference type="HOGENOM" id="CLU_050019_1_0_9"/>
<dbReference type="GO" id="GO:0003677">
    <property type="term" value="F:DNA binding"/>
    <property type="evidence" value="ECO:0007669"/>
    <property type="project" value="InterPro"/>
</dbReference>
<dbReference type="GO" id="GO:0045892">
    <property type="term" value="P:negative regulation of DNA-templated transcription"/>
    <property type="evidence" value="ECO:0007669"/>
    <property type="project" value="UniProtKB-UniRule"/>
</dbReference>
<dbReference type="Gene3D" id="3.30.450.40">
    <property type="match status" value="1"/>
</dbReference>
<dbReference type="Gene3D" id="3.30.390.60">
    <property type="entry name" value="Heat-inducible transcription repressor hrca homolog, domain 3"/>
    <property type="match status" value="1"/>
</dbReference>
<dbReference type="Gene3D" id="1.10.10.10">
    <property type="entry name" value="Winged helix-like DNA-binding domain superfamily/Winged helix DNA-binding domain"/>
    <property type="match status" value="1"/>
</dbReference>
<dbReference type="HAMAP" id="MF_00081">
    <property type="entry name" value="HrcA"/>
    <property type="match status" value="1"/>
</dbReference>
<dbReference type="InterPro" id="IPR029016">
    <property type="entry name" value="GAF-like_dom_sf"/>
</dbReference>
<dbReference type="InterPro" id="IPR002571">
    <property type="entry name" value="HrcA"/>
</dbReference>
<dbReference type="InterPro" id="IPR021153">
    <property type="entry name" value="HrcA_C"/>
</dbReference>
<dbReference type="InterPro" id="IPR036388">
    <property type="entry name" value="WH-like_DNA-bd_sf"/>
</dbReference>
<dbReference type="InterPro" id="IPR036390">
    <property type="entry name" value="WH_DNA-bd_sf"/>
</dbReference>
<dbReference type="InterPro" id="IPR005104">
    <property type="entry name" value="WHTH_HrcA_DNA-bd"/>
</dbReference>
<dbReference type="InterPro" id="IPR023120">
    <property type="entry name" value="WHTH_transcript_rep_HrcA_IDD"/>
</dbReference>
<dbReference type="NCBIfam" id="TIGR00331">
    <property type="entry name" value="hrcA"/>
    <property type="match status" value="1"/>
</dbReference>
<dbReference type="PANTHER" id="PTHR34824">
    <property type="entry name" value="HEAT-INDUCIBLE TRANSCRIPTION REPRESSOR HRCA"/>
    <property type="match status" value="1"/>
</dbReference>
<dbReference type="PANTHER" id="PTHR34824:SF1">
    <property type="entry name" value="HEAT-INDUCIBLE TRANSCRIPTION REPRESSOR HRCA"/>
    <property type="match status" value="1"/>
</dbReference>
<dbReference type="Pfam" id="PF01628">
    <property type="entry name" value="HrcA"/>
    <property type="match status" value="1"/>
</dbReference>
<dbReference type="Pfam" id="PF03444">
    <property type="entry name" value="HrcA_DNA-bdg"/>
    <property type="match status" value="1"/>
</dbReference>
<dbReference type="PIRSF" id="PIRSF005485">
    <property type="entry name" value="HrcA"/>
    <property type="match status" value="1"/>
</dbReference>
<dbReference type="SUPFAM" id="SSF55781">
    <property type="entry name" value="GAF domain-like"/>
    <property type="match status" value="1"/>
</dbReference>
<dbReference type="SUPFAM" id="SSF46785">
    <property type="entry name" value="Winged helix' DNA-binding domain"/>
    <property type="match status" value="1"/>
</dbReference>
<accession>Q3K3T4</accession>
<feature type="chain" id="PRO_1000010455" description="Heat-inducible transcription repressor HrcA">
    <location>
        <begin position="1"/>
        <end position="344"/>
    </location>
</feature>
<organism>
    <name type="scientific">Streptococcus agalactiae serotype Ia (strain ATCC 27591 / A909 / CDC SS700)</name>
    <dbReference type="NCBI Taxonomy" id="205921"/>
    <lineage>
        <taxon>Bacteria</taxon>
        <taxon>Bacillati</taxon>
        <taxon>Bacillota</taxon>
        <taxon>Bacilli</taxon>
        <taxon>Lactobacillales</taxon>
        <taxon>Streptococcaceae</taxon>
        <taxon>Streptococcus</taxon>
    </lineage>
</organism>
<name>HRCA_STRA1</name>
<gene>
    <name evidence="1" type="primary">hrcA</name>
    <name type="ordered locus">SAK_0145</name>
</gene>